<feature type="chain" id="PRO_0000095285" description="Tyrosine recombinase XerC">
    <location>
        <begin position="1"/>
        <end position="321"/>
    </location>
</feature>
<feature type="domain" description="Core-binding (CB)" evidence="3">
    <location>
        <begin position="16"/>
        <end position="107"/>
    </location>
</feature>
<feature type="domain" description="Tyr recombinase" evidence="2">
    <location>
        <begin position="128"/>
        <end position="315"/>
    </location>
</feature>
<feature type="active site" evidence="1">
    <location>
        <position position="173"/>
    </location>
</feature>
<feature type="active site" evidence="1">
    <location>
        <position position="199"/>
    </location>
</feature>
<feature type="active site" evidence="1">
    <location>
        <position position="267"/>
    </location>
</feature>
<feature type="active site" evidence="1">
    <location>
        <position position="270"/>
    </location>
</feature>
<feature type="active site" evidence="1">
    <location>
        <position position="293"/>
    </location>
</feature>
<feature type="active site" description="O-(3'-phospho-DNA)-tyrosine intermediate" evidence="1">
    <location>
        <position position="302"/>
    </location>
</feature>
<proteinExistence type="inferred from homology"/>
<dbReference type="EMBL" id="BA000040">
    <property type="protein sequence ID" value="BAC45711.1"/>
    <property type="molecule type" value="Genomic_DNA"/>
</dbReference>
<dbReference type="RefSeq" id="NP_767086.1">
    <property type="nucleotide sequence ID" value="NC_004463.1"/>
</dbReference>
<dbReference type="RefSeq" id="WP_011083278.1">
    <property type="nucleotide sequence ID" value="NC_004463.1"/>
</dbReference>
<dbReference type="SMR" id="Q89X68"/>
<dbReference type="FunCoup" id="Q89X68">
    <property type="interactions" value="48"/>
</dbReference>
<dbReference type="STRING" id="224911.AAV28_41480"/>
<dbReference type="EnsemblBacteria" id="BAC45711">
    <property type="protein sequence ID" value="BAC45711"/>
    <property type="gene ID" value="BAC45711"/>
</dbReference>
<dbReference type="GeneID" id="46495592"/>
<dbReference type="KEGG" id="bja:blr0446"/>
<dbReference type="PATRIC" id="fig|224911.44.peg.8977"/>
<dbReference type="eggNOG" id="COG4973">
    <property type="taxonomic scope" value="Bacteria"/>
</dbReference>
<dbReference type="HOGENOM" id="CLU_027562_9_0_5"/>
<dbReference type="InParanoid" id="Q89X68"/>
<dbReference type="OrthoDB" id="9801717at2"/>
<dbReference type="PhylomeDB" id="Q89X68"/>
<dbReference type="Proteomes" id="UP000002526">
    <property type="component" value="Chromosome"/>
</dbReference>
<dbReference type="GO" id="GO:0005737">
    <property type="term" value="C:cytoplasm"/>
    <property type="evidence" value="ECO:0007669"/>
    <property type="project" value="UniProtKB-SubCell"/>
</dbReference>
<dbReference type="GO" id="GO:0048476">
    <property type="term" value="C:Holliday junction resolvase complex"/>
    <property type="evidence" value="ECO:0000318"/>
    <property type="project" value="GO_Central"/>
</dbReference>
<dbReference type="GO" id="GO:0003677">
    <property type="term" value="F:DNA binding"/>
    <property type="evidence" value="ECO:0000318"/>
    <property type="project" value="GO_Central"/>
</dbReference>
<dbReference type="GO" id="GO:0009037">
    <property type="term" value="F:tyrosine-based site-specific recombinase activity"/>
    <property type="evidence" value="ECO:0000318"/>
    <property type="project" value="GO_Central"/>
</dbReference>
<dbReference type="GO" id="GO:0051301">
    <property type="term" value="P:cell division"/>
    <property type="evidence" value="ECO:0007669"/>
    <property type="project" value="UniProtKB-KW"/>
</dbReference>
<dbReference type="GO" id="GO:0007059">
    <property type="term" value="P:chromosome segregation"/>
    <property type="evidence" value="ECO:0000318"/>
    <property type="project" value="GO_Central"/>
</dbReference>
<dbReference type="GO" id="GO:0006310">
    <property type="term" value="P:DNA recombination"/>
    <property type="evidence" value="ECO:0000318"/>
    <property type="project" value="GO_Central"/>
</dbReference>
<dbReference type="GO" id="GO:0006313">
    <property type="term" value="P:DNA transposition"/>
    <property type="evidence" value="ECO:0007669"/>
    <property type="project" value="UniProtKB-UniRule"/>
</dbReference>
<dbReference type="GO" id="GO:0071139">
    <property type="term" value="P:resolution of DNA recombination intermediates"/>
    <property type="evidence" value="ECO:0000318"/>
    <property type="project" value="GO_Central"/>
</dbReference>
<dbReference type="Gene3D" id="1.10.150.130">
    <property type="match status" value="1"/>
</dbReference>
<dbReference type="Gene3D" id="1.10.443.10">
    <property type="entry name" value="Intergrase catalytic core"/>
    <property type="match status" value="1"/>
</dbReference>
<dbReference type="HAMAP" id="MF_01808">
    <property type="entry name" value="Recomb_XerC_XerD"/>
    <property type="match status" value="1"/>
</dbReference>
<dbReference type="InterPro" id="IPR044068">
    <property type="entry name" value="CB"/>
</dbReference>
<dbReference type="InterPro" id="IPR011010">
    <property type="entry name" value="DNA_brk_join_enz"/>
</dbReference>
<dbReference type="InterPro" id="IPR013762">
    <property type="entry name" value="Integrase-like_cat_sf"/>
</dbReference>
<dbReference type="InterPro" id="IPR002104">
    <property type="entry name" value="Integrase_catalytic"/>
</dbReference>
<dbReference type="InterPro" id="IPR010998">
    <property type="entry name" value="Integrase_recombinase_N"/>
</dbReference>
<dbReference type="InterPro" id="IPR004107">
    <property type="entry name" value="Integrase_SAM-like_N"/>
</dbReference>
<dbReference type="InterPro" id="IPR023009">
    <property type="entry name" value="Tyrosine_recombinase_XerC/XerD"/>
</dbReference>
<dbReference type="InterPro" id="IPR050090">
    <property type="entry name" value="Tyrosine_recombinase_XerCD"/>
</dbReference>
<dbReference type="PANTHER" id="PTHR30349">
    <property type="entry name" value="PHAGE INTEGRASE-RELATED"/>
    <property type="match status" value="1"/>
</dbReference>
<dbReference type="PANTHER" id="PTHR30349:SF90">
    <property type="entry name" value="TYROSINE RECOMBINASE XERD"/>
    <property type="match status" value="1"/>
</dbReference>
<dbReference type="Pfam" id="PF02899">
    <property type="entry name" value="Phage_int_SAM_1"/>
    <property type="match status" value="1"/>
</dbReference>
<dbReference type="Pfam" id="PF00589">
    <property type="entry name" value="Phage_integrase"/>
    <property type="match status" value="1"/>
</dbReference>
<dbReference type="SUPFAM" id="SSF56349">
    <property type="entry name" value="DNA breaking-rejoining enzymes"/>
    <property type="match status" value="1"/>
</dbReference>
<dbReference type="SUPFAM" id="SSF47823">
    <property type="entry name" value="lambda integrase-like, N-terminal domain"/>
    <property type="match status" value="1"/>
</dbReference>
<dbReference type="PROSITE" id="PS51900">
    <property type="entry name" value="CB"/>
    <property type="match status" value="1"/>
</dbReference>
<dbReference type="PROSITE" id="PS51898">
    <property type="entry name" value="TYR_RECOMBINASE"/>
    <property type="match status" value="1"/>
</dbReference>
<name>XERC_BRADU</name>
<protein>
    <recommendedName>
        <fullName evidence="1">Tyrosine recombinase XerC</fullName>
    </recommendedName>
</protein>
<comment type="function">
    <text evidence="1">Site-specific tyrosine recombinase, which acts by catalyzing the cutting and rejoining of the recombining DNA molecules. The XerC-XerD complex is essential to convert dimers of the bacterial chromosome into monomers to permit their segregation at cell division. It also contributes to the segregational stability of plasmids.</text>
</comment>
<comment type="subunit">
    <text evidence="1">Forms a cyclic heterotetrameric complex composed of two molecules of XerC and two molecules of XerD.</text>
</comment>
<comment type="subcellular location">
    <subcellularLocation>
        <location evidence="1">Cytoplasm</location>
    </subcellularLocation>
</comment>
<comment type="similarity">
    <text evidence="1">Belongs to the 'phage' integrase family. XerC subfamily.</text>
</comment>
<gene>
    <name evidence="1" type="primary">xerC</name>
    <name type="ordered locus">blr0446</name>
</gene>
<accession>Q89X68</accession>
<evidence type="ECO:0000255" key="1">
    <source>
        <dbReference type="HAMAP-Rule" id="MF_01808"/>
    </source>
</evidence>
<evidence type="ECO:0000255" key="2">
    <source>
        <dbReference type="PROSITE-ProRule" id="PRU01246"/>
    </source>
</evidence>
<evidence type="ECO:0000255" key="3">
    <source>
        <dbReference type="PROSITE-ProRule" id="PRU01248"/>
    </source>
</evidence>
<organism>
    <name type="scientific">Bradyrhizobium diazoefficiens (strain JCM 10833 / BCRC 13528 / IAM 13628 / NBRC 14792 / USDA 110)</name>
    <dbReference type="NCBI Taxonomy" id="224911"/>
    <lineage>
        <taxon>Bacteria</taxon>
        <taxon>Pseudomonadati</taxon>
        <taxon>Pseudomonadota</taxon>
        <taxon>Alphaproteobacteria</taxon>
        <taxon>Hyphomicrobiales</taxon>
        <taxon>Nitrobacteraceae</taxon>
        <taxon>Bradyrhizobium</taxon>
    </lineage>
</organism>
<reference key="1">
    <citation type="journal article" date="2002" name="DNA Res.">
        <title>Complete genomic sequence of nitrogen-fixing symbiotic bacterium Bradyrhizobium japonicum USDA110.</title>
        <authorList>
            <person name="Kaneko T."/>
            <person name="Nakamura Y."/>
            <person name="Sato S."/>
            <person name="Minamisawa K."/>
            <person name="Uchiumi T."/>
            <person name="Sasamoto S."/>
            <person name="Watanabe A."/>
            <person name="Idesawa K."/>
            <person name="Iriguchi M."/>
            <person name="Kawashima K."/>
            <person name="Kohara M."/>
            <person name="Matsumoto M."/>
            <person name="Shimpo S."/>
            <person name="Tsuruoka H."/>
            <person name="Wada T."/>
            <person name="Yamada M."/>
            <person name="Tabata S."/>
        </authorList>
    </citation>
    <scope>NUCLEOTIDE SEQUENCE [LARGE SCALE GENOMIC DNA]</scope>
    <source>
        <strain>JCM 10833 / BCRC 13528 / IAM 13628 / NBRC 14792 / USDA 110</strain>
    </source>
</reference>
<keyword id="KW-0131">Cell cycle</keyword>
<keyword id="KW-0132">Cell division</keyword>
<keyword id="KW-0159">Chromosome partition</keyword>
<keyword id="KW-0963">Cytoplasm</keyword>
<keyword id="KW-0229">DNA integration</keyword>
<keyword id="KW-0233">DNA recombination</keyword>
<keyword id="KW-0238">DNA-binding</keyword>
<keyword id="KW-1185">Reference proteome</keyword>
<sequence length="321" mass="35029">MSKAAAPQIELASADPSIAQEMTRWLSHLGAERRLSPKTLEAYGRDLRQCLDFLCNHWGERVTLKRFAALEATDVRAFMAMRRADDIAGRSLMRALAGLRSFGRFLEREGKGKVGALSAIRAPKVAKSLPKPLPMASAKRLADADERAGEERETWILARDAAVMALLYGSGLRISEALGLKRREVPKPGEGDVLVVTGKGNKTRMVPVLQNVLALVQEYVSMCPYPLPAEGPIFVGARGGPLSPRIIQLAMERLRGALGLPDSATPHALRHSFATHLLSRGGDLRAIQELLGHSSLSTTQIYTGIDSERLLEVYASAHPRR</sequence>